<name>MSTO1_DANRE</name>
<accession>Q1L908</accession>
<accession>Q803N4</accession>
<reference key="1">
    <citation type="journal article" date="2013" name="Nature">
        <title>The zebrafish reference genome sequence and its relationship to the human genome.</title>
        <authorList>
            <person name="Howe K."/>
            <person name="Clark M.D."/>
            <person name="Torroja C.F."/>
            <person name="Torrance J."/>
            <person name="Berthelot C."/>
            <person name="Muffato M."/>
            <person name="Collins J.E."/>
            <person name="Humphray S."/>
            <person name="McLaren K."/>
            <person name="Matthews L."/>
            <person name="McLaren S."/>
            <person name="Sealy I."/>
            <person name="Caccamo M."/>
            <person name="Churcher C."/>
            <person name="Scott C."/>
            <person name="Barrett J.C."/>
            <person name="Koch R."/>
            <person name="Rauch G.J."/>
            <person name="White S."/>
            <person name="Chow W."/>
            <person name="Kilian B."/>
            <person name="Quintais L.T."/>
            <person name="Guerra-Assuncao J.A."/>
            <person name="Zhou Y."/>
            <person name="Gu Y."/>
            <person name="Yen J."/>
            <person name="Vogel J.H."/>
            <person name="Eyre T."/>
            <person name="Redmond S."/>
            <person name="Banerjee R."/>
            <person name="Chi J."/>
            <person name="Fu B."/>
            <person name="Langley E."/>
            <person name="Maguire S.F."/>
            <person name="Laird G.K."/>
            <person name="Lloyd D."/>
            <person name="Kenyon E."/>
            <person name="Donaldson S."/>
            <person name="Sehra H."/>
            <person name="Almeida-King J."/>
            <person name="Loveland J."/>
            <person name="Trevanion S."/>
            <person name="Jones M."/>
            <person name="Quail M."/>
            <person name="Willey D."/>
            <person name="Hunt A."/>
            <person name="Burton J."/>
            <person name="Sims S."/>
            <person name="McLay K."/>
            <person name="Plumb B."/>
            <person name="Davis J."/>
            <person name="Clee C."/>
            <person name="Oliver K."/>
            <person name="Clark R."/>
            <person name="Riddle C."/>
            <person name="Elliot D."/>
            <person name="Threadgold G."/>
            <person name="Harden G."/>
            <person name="Ware D."/>
            <person name="Begum S."/>
            <person name="Mortimore B."/>
            <person name="Kerry G."/>
            <person name="Heath P."/>
            <person name="Phillimore B."/>
            <person name="Tracey A."/>
            <person name="Corby N."/>
            <person name="Dunn M."/>
            <person name="Johnson C."/>
            <person name="Wood J."/>
            <person name="Clark S."/>
            <person name="Pelan S."/>
            <person name="Griffiths G."/>
            <person name="Smith M."/>
            <person name="Glithero R."/>
            <person name="Howden P."/>
            <person name="Barker N."/>
            <person name="Lloyd C."/>
            <person name="Stevens C."/>
            <person name="Harley J."/>
            <person name="Holt K."/>
            <person name="Panagiotidis G."/>
            <person name="Lovell J."/>
            <person name="Beasley H."/>
            <person name="Henderson C."/>
            <person name="Gordon D."/>
            <person name="Auger K."/>
            <person name="Wright D."/>
            <person name="Collins J."/>
            <person name="Raisen C."/>
            <person name="Dyer L."/>
            <person name="Leung K."/>
            <person name="Robertson L."/>
            <person name="Ambridge K."/>
            <person name="Leongamornlert D."/>
            <person name="McGuire S."/>
            <person name="Gilderthorp R."/>
            <person name="Griffiths C."/>
            <person name="Manthravadi D."/>
            <person name="Nichol S."/>
            <person name="Barker G."/>
            <person name="Whitehead S."/>
            <person name="Kay M."/>
            <person name="Brown J."/>
            <person name="Murnane C."/>
            <person name="Gray E."/>
            <person name="Humphries M."/>
            <person name="Sycamore N."/>
            <person name="Barker D."/>
            <person name="Saunders D."/>
            <person name="Wallis J."/>
            <person name="Babbage A."/>
            <person name="Hammond S."/>
            <person name="Mashreghi-Mohammadi M."/>
            <person name="Barr L."/>
            <person name="Martin S."/>
            <person name="Wray P."/>
            <person name="Ellington A."/>
            <person name="Matthews N."/>
            <person name="Ellwood M."/>
            <person name="Woodmansey R."/>
            <person name="Clark G."/>
            <person name="Cooper J."/>
            <person name="Tromans A."/>
            <person name="Grafham D."/>
            <person name="Skuce C."/>
            <person name="Pandian R."/>
            <person name="Andrews R."/>
            <person name="Harrison E."/>
            <person name="Kimberley A."/>
            <person name="Garnett J."/>
            <person name="Fosker N."/>
            <person name="Hall R."/>
            <person name="Garner P."/>
            <person name="Kelly D."/>
            <person name="Bird C."/>
            <person name="Palmer S."/>
            <person name="Gehring I."/>
            <person name="Berger A."/>
            <person name="Dooley C.M."/>
            <person name="Ersan-Urun Z."/>
            <person name="Eser C."/>
            <person name="Geiger H."/>
            <person name="Geisler M."/>
            <person name="Karotki L."/>
            <person name="Kirn A."/>
            <person name="Konantz J."/>
            <person name="Konantz M."/>
            <person name="Oberlander M."/>
            <person name="Rudolph-Geiger S."/>
            <person name="Teucke M."/>
            <person name="Lanz C."/>
            <person name="Raddatz G."/>
            <person name="Osoegawa K."/>
            <person name="Zhu B."/>
            <person name="Rapp A."/>
            <person name="Widaa S."/>
            <person name="Langford C."/>
            <person name="Yang F."/>
            <person name="Schuster S.C."/>
            <person name="Carter N.P."/>
            <person name="Harrow J."/>
            <person name="Ning Z."/>
            <person name="Herrero J."/>
            <person name="Searle S.M."/>
            <person name="Enright A."/>
            <person name="Geisler R."/>
            <person name="Plasterk R.H."/>
            <person name="Lee C."/>
            <person name="Westerfield M."/>
            <person name="de Jong P.J."/>
            <person name="Zon L.I."/>
            <person name="Postlethwait J.H."/>
            <person name="Nusslein-Volhard C."/>
            <person name="Hubbard T.J."/>
            <person name="Roest Crollius H."/>
            <person name="Rogers J."/>
            <person name="Stemple D.L."/>
        </authorList>
    </citation>
    <scope>NUCLEOTIDE SEQUENCE [LARGE SCALE GENOMIC DNA]</scope>
    <source>
        <strain>Tuebingen</strain>
    </source>
</reference>
<reference key="2">
    <citation type="submission" date="2003-01" db="EMBL/GenBank/DDBJ databases">
        <authorList>
            <consortium name="NIH - Zebrafish Gene Collection (ZGC) project"/>
        </authorList>
    </citation>
    <scope>NUCLEOTIDE SEQUENCE [LARGE SCALE MRNA]</scope>
    <source>
        <strain>AB</strain>
    </source>
</reference>
<sequence length="591" mass="64924">MSGACREVVTLQLGHYSNFIGTHWWNLQDAGLVYDADVPAGELQSDVLFREGLTLAGHVTYTPRLIAIDLKGSLQTLRKEGSLYDTENENSAFTWDGQIMTHQESPPSKNSFLQELDNLDTGGVLAESDFNHLTSSVDNCSVPGASVAVETINSSLERIQKSYRLEGSVRVWSDFLRLHLHPRTISVINQYNHDGESERLEVFGQGEALLQGQVLEDLEDRLHFFIEECDYLQGFQVLCDLTDGFSGLGSKVTEYLQDSYGGRGILTWGVAPVNHPDTSSMKDLYHMMNCALGTLQMANHSSLFCPLTLRGGLCRRPPPPTAFPLLNCDPLLWYHSSSVLALALDALTVSYRMRHCSATMWQLSDALTTSGRKVVSAYGSVPFPMMLGGCLPDALDAFSNAVPWRSLSACPEISDRRFCFSQSVTLKGVDEQSLVSRLLPGMEAPSPLHYERSGEDVLSAYVRSHYPSSPLAVQLVSSGSKVTPPFPQIFSPSLSAQGFLQSHSTPASPSCPPVSCLPVLTSLQSSPAVGLQLSELQRACASLDLRRVAPSFLTHGPEHAEISEYLEQLRNLAHCYRQSHSRSSSEEDDDD</sequence>
<dbReference type="EMBL" id="CR391989">
    <property type="protein sequence ID" value="CAK10881.1"/>
    <property type="molecule type" value="Genomic_DNA"/>
</dbReference>
<dbReference type="EMBL" id="BC044406">
    <property type="protein sequence ID" value="AAH44406.1"/>
    <property type="molecule type" value="mRNA"/>
</dbReference>
<dbReference type="RefSeq" id="NP_956181.1">
    <property type="nucleotide sequence ID" value="NM_199887.1"/>
</dbReference>
<dbReference type="FunCoup" id="Q1L908">
    <property type="interactions" value="1152"/>
</dbReference>
<dbReference type="STRING" id="7955.ENSDARP00000029170"/>
<dbReference type="PaxDb" id="7955-ENSDARP00000029170"/>
<dbReference type="Ensembl" id="ENSDART00000037515">
    <property type="protein sequence ID" value="ENSDARP00000029170"/>
    <property type="gene ID" value="ENSDARG00000024381"/>
</dbReference>
<dbReference type="GeneID" id="334306"/>
<dbReference type="KEGG" id="dre:334306"/>
<dbReference type="AGR" id="ZFIN:ZDB-GENE-030131-6238"/>
<dbReference type="CTD" id="55154"/>
<dbReference type="ZFIN" id="ZDB-GENE-030131-6238">
    <property type="gene designation" value="msto1"/>
</dbReference>
<dbReference type="eggNOG" id="KOG2530">
    <property type="taxonomic scope" value="Eukaryota"/>
</dbReference>
<dbReference type="HOGENOM" id="CLU_022511_0_0_1"/>
<dbReference type="InParanoid" id="Q1L908"/>
<dbReference type="OMA" id="RMAAYGC"/>
<dbReference type="OrthoDB" id="271881at2759"/>
<dbReference type="PhylomeDB" id="Q1L908"/>
<dbReference type="TreeFam" id="TF323669"/>
<dbReference type="PRO" id="PR:Q1L908"/>
<dbReference type="Proteomes" id="UP000000437">
    <property type="component" value="Chromosome 19"/>
</dbReference>
<dbReference type="Bgee" id="ENSDARG00000024381">
    <property type="expression patterns" value="Expressed in gastrula and 24 other cell types or tissues"/>
</dbReference>
<dbReference type="GO" id="GO:0005737">
    <property type="term" value="C:cytoplasm"/>
    <property type="evidence" value="ECO:0000318"/>
    <property type="project" value="GO_Central"/>
</dbReference>
<dbReference type="GO" id="GO:0005741">
    <property type="term" value="C:mitochondrial outer membrane"/>
    <property type="evidence" value="ECO:0007669"/>
    <property type="project" value="UniProtKB-SubCell"/>
</dbReference>
<dbReference type="GO" id="GO:0005739">
    <property type="term" value="C:mitochondrion"/>
    <property type="evidence" value="ECO:0000318"/>
    <property type="project" value="GO_Central"/>
</dbReference>
<dbReference type="GO" id="GO:0007005">
    <property type="term" value="P:mitochondrion organization"/>
    <property type="evidence" value="ECO:0000318"/>
    <property type="project" value="GO_Central"/>
</dbReference>
<dbReference type="CDD" id="cd06060">
    <property type="entry name" value="misato"/>
    <property type="match status" value="1"/>
</dbReference>
<dbReference type="Gene3D" id="3.40.50.1440">
    <property type="entry name" value="Tubulin/FtsZ, GTPase domain"/>
    <property type="match status" value="1"/>
</dbReference>
<dbReference type="InterPro" id="IPR049942">
    <property type="entry name" value="DML1/Misato"/>
</dbReference>
<dbReference type="InterPro" id="IPR029209">
    <property type="entry name" value="DML1/Misato_tubulin"/>
</dbReference>
<dbReference type="InterPro" id="IPR019605">
    <property type="entry name" value="Misato_II_tubulin-like"/>
</dbReference>
<dbReference type="InterPro" id="IPR036525">
    <property type="entry name" value="Tubulin/FtsZ_GTPase_sf"/>
</dbReference>
<dbReference type="PANTHER" id="PTHR13391">
    <property type="entry name" value="MITOCHONDRIAL DISTRIBUTION REGULATOR MISATO"/>
    <property type="match status" value="1"/>
</dbReference>
<dbReference type="PANTHER" id="PTHR13391:SF0">
    <property type="entry name" value="PROTEIN MISATO HOMOLOG 1"/>
    <property type="match status" value="1"/>
</dbReference>
<dbReference type="Pfam" id="PF10644">
    <property type="entry name" value="Misat_Tub_SegII"/>
    <property type="match status" value="1"/>
</dbReference>
<dbReference type="Pfam" id="PF14881">
    <property type="entry name" value="Tubulin_3"/>
    <property type="match status" value="1"/>
</dbReference>
<dbReference type="SUPFAM" id="SSF52490">
    <property type="entry name" value="Tubulin nucleotide-binding domain-like"/>
    <property type="match status" value="1"/>
</dbReference>
<keyword id="KW-0963">Cytoplasm</keyword>
<keyword id="KW-0472">Membrane</keyword>
<keyword id="KW-0496">Mitochondrion</keyword>
<keyword id="KW-1000">Mitochondrion outer membrane</keyword>
<keyword id="KW-1185">Reference proteome</keyword>
<feature type="chain" id="PRO_0000304630" description="Protein misato homolog 1">
    <location>
        <begin position="1"/>
        <end position="591"/>
    </location>
</feature>
<feature type="sequence conflict" description="In Ref. 2; AAH44406." evidence="2" ref="2">
    <original>S</original>
    <variation>R</variation>
    <location>
        <position position="111"/>
    </location>
</feature>
<feature type="sequence conflict" description="In Ref. 2; AAH44406." evidence="2" ref="2">
    <original>S</original>
    <variation>P</variation>
    <location>
        <position position="128"/>
    </location>
</feature>
<evidence type="ECO:0000250" key="1">
    <source>
        <dbReference type="UniProtKB" id="Q9BUK6"/>
    </source>
</evidence>
<evidence type="ECO:0000305" key="2"/>
<comment type="function">
    <text evidence="1">Involved in the regulation of mitochondrial distribution and morphology. Required for mitochondrial fusion and mitochondrial network formation.</text>
</comment>
<comment type="subcellular location">
    <subcellularLocation>
        <location evidence="1">Mitochondrion outer membrane</location>
    </subcellularLocation>
    <subcellularLocation>
        <location evidence="1">Cytoplasm</location>
    </subcellularLocation>
</comment>
<comment type="similarity">
    <text evidence="2">Belongs to the misato family.</text>
</comment>
<organism>
    <name type="scientific">Danio rerio</name>
    <name type="common">Zebrafish</name>
    <name type="synonym">Brachydanio rerio</name>
    <dbReference type="NCBI Taxonomy" id="7955"/>
    <lineage>
        <taxon>Eukaryota</taxon>
        <taxon>Metazoa</taxon>
        <taxon>Chordata</taxon>
        <taxon>Craniata</taxon>
        <taxon>Vertebrata</taxon>
        <taxon>Euteleostomi</taxon>
        <taxon>Actinopterygii</taxon>
        <taxon>Neopterygii</taxon>
        <taxon>Teleostei</taxon>
        <taxon>Ostariophysi</taxon>
        <taxon>Cypriniformes</taxon>
        <taxon>Danionidae</taxon>
        <taxon>Danioninae</taxon>
        <taxon>Danio</taxon>
    </lineage>
</organism>
<proteinExistence type="evidence at transcript level"/>
<gene>
    <name type="primary">msto1</name>
    <name type="ORF">si:dkey-263h23.5</name>
    <name type="ORF">zgc:55470</name>
</gene>
<protein>
    <recommendedName>
        <fullName>Protein misato homolog 1</fullName>
    </recommendedName>
</protein>